<sequence>MTEITETAEAQAALLSAALPYMQRYENKTVVIKYGGHAMGDIALGRAFARDVALLKQSGVNPIVVHGGGPQIGDMLKRMGIESKFEGGLRVTDQKTVEIVEMVLAGSINKEIVALINAEGEWAIGLCGKDGNMVFAEKARKTVVDPDSNIERVLDLGFVGEPVEVDRTLLDLLARSEMIPVLAPVAPGRDGYTYNINADTFAGAIAGAVKASRLLFLTDVPGVLDRDKKLINELTVSQARALIKDGTISGGMIPKVETCIEAIQRGVEGVVILNGKTAHSVLLELFTEHGAGTLIVP</sequence>
<accession>Q11LE1</accession>
<dbReference type="EC" id="2.7.2.8" evidence="1"/>
<dbReference type="EMBL" id="CP000390">
    <property type="protein sequence ID" value="ABG61784.1"/>
    <property type="status" value="ALT_INIT"/>
    <property type="molecule type" value="Genomic_DNA"/>
</dbReference>
<dbReference type="SMR" id="Q11LE1"/>
<dbReference type="STRING" id="266779.Meso_0380"/>
<dbReference type="KEGG" id="mes:Meso_0380"/>
<dbReference type="eggNOG" id="COG0548">
    <property type="taxonomic scope" value="Bacteria"/>
</dbReference>
<dbReference type="HOGENOM" id="CLU_053680_0_0_5"/>
<dbReference type="OrthoDB" id="9803155at2"/>
<dbReference type="UniPathway" id="UPA00068">
    <property type="reaction ID" value="UER00107"/>
</dbReference>
<dbReference type="GO" id="GO:0005737">
    <property type="term" value="C:cytoplasm"/>
    <property type="evidence" value="ECO:0007669"/>
    <property type="project" value="UniProtKB-SubCell"/>
</dbReference>
<dbReference type="GO" id="GO:0003991">
    <property type="term" value="F:acetylglutamate kinase activity"/>
    <property type="evidence" value="ECO:0007669"/>
    <property type="project" value="UniProtKB-UniRule"/>
</dbReference>
<dbReference type="GO" id="GO:0005524">
    <property type="term" value="F:ATP binding"/>
    <property type="evidence" value="ECO:0007669"/>
    <property type="project" value="UniProtKB-UniRule"/>
</dbReference>
<dbReference type="GO" id="GO:0042450">
    <property type="term" value="P:arginine biosynthetic process via ornithine"/>
    <property type="evidence" value="ECO:0007669"/>
    <property type="project" value="UniProtKB-UniRule"/>
</dbReference>
<dbReference type="GO" id="GO:0006526">
    <property type="term" value="P:L-arginine biosynthetic process"/>
    <property type="evidence" value="ECO:0007669"/>
    <property type="project" value="UniProtKB-UniPathway"/>
</dbReference>
<dbReference type="CDD" id="cd04250">
    <property type="entry name" value="AAK_NAGK-C"/>
    <property type="match status" value="1"/>
</dbReference>
<dbReference type="FunFam" id="3.40.1160.10:FF:000004">
    <property type="entry name" value="Acetylglutamate kinase"/>
    <property type="match status" value="1"/>
</dbReference>
<dbReference type="Gene3D" id="3.40.1160.10">
    <property type="entry name" value="Acetylglutamate kinase-like"/>
    <property type="match status" value="1"/>
</dbReference>
<dbReference type="HAMAP" id="MF_00082">
    <property type="entry name" value="ArgB"/>
    <property type="match status" value="1"/>
</dbReference>
<dbReference type="InterPro" id="IPR036393">
    <property type="entry name" value="AceGlu_kinase-like_sf"/>
</dbReference>
<dbReference type="InterPro" id="IPR004662">
    <property type="entry name" value="AcgluKinase_fam"/>
</dbReference>
<dbReference type="InterPro" id="IPR037528">
    <property type="entry name" value="ArgB"/>
</dbReference>
<dbReference type="InterPro" id="IPR001048">
    <property type="entry name" value="Asp/Glu/Uridylate_kinase"/>
</dbReference>
<dbReference type="InterPro" id="IPR001057">
    <property type="entry name" value="Glu/AcGlu_kinase"/>
</dbReference>
<dbReference type="InterPro" id="IPR041727">
    <property type="entry name" value="NAGK-C"/>
</dbReference>
<dbReference type="NCBIfam" id="TIGR00761">
    <property type="entry name" value="argB"/>
    <property type="match status" value="1"/>
</dbReference>
<dbReference type="PANTHER" id="PTHR23342">
    <property type="entry name" value="N-ACETYLGLUTAMATE SYNTHASE"/>
    <property type="match status" value="1"/>
</dbReference>
<dbReference type="PANTHER" id="PTHR23342:SF0">
    <property type="entry name" value="N-ACETYLGLUTAMATE SYNTHASE, MITOCHONDRIAL"/>
    <property type="match status" value="1"/>
</dbReference>
<dbReference type="Pfam" id="PF00696">
    <property type="entry name" value="AA_kinase"/>
    <property type="match status" value="1"/>
</dbReference>
<dbReference type="PIRSF" id="PIRSF000728">
    <property type="entry name" value="NAGK"/>
    <property type="match status" value="1"/>
</dbReference>
<dbReference type="PRINTS" id="PR00474">
    <property type="entry name" value="GLU5KINASE"/>
</dbReference>
<dbReference type="SUPFAM" id="SSF53633">
    <property type="entry name" value="Carbamate kinase-like"/>
    <property type="match status" value="1"/>
</dbReference>
<reference key="1">
    <citation type="submission" date="2006-06" db="EMBL/GenBank/DDBJ databases">
        <title>Complete sequence of chromosome of Mesorhizobium sp. BNC1.</title>
        <authorList>
            <consortium name="US DOE Joint Genome Institute"/>
            <person name="Copeland A."/>
            <person name="Lucas S."/>
            <person name="Lapidus A."/>
            <person name="Barry K."/>
            <person name="Detter J.C."/>
            <person name="Glavina del Rio T."/>
            <person name="Hammon N."/>
            <person name="Israni S."/>
            <person name="Dalin E."/>
            <person name="Tice H."/>
            <person name="Pitluck S."/>
            <person name="Chertkov O."/>
            <person name="Brettin T."/>
            <person name="Bruce D."/>
            <person name="Han C."/>
            <person name="Tapia R."/>
            <person name="Gilna P."/>
            <person name="Schmutz J."/>
            <person name="Larimer F."/>
            <person name="Land M."/>
            <person name="Hauser L."/>
            <person name="Kyrpides N."/>
            <person name="Mikhailova N."/>
            <person name="Richardson P."/>
        </authorList>
    </citation>
    <scope>NUCLEOTIDE SEQUENCE [LARGE SCALE GENOMIC DNA]</scope>
    <source>
        <strain>BNC1</strain>
    </source>
</reference>
<organism>
    <name type="scientific">Chelativorans sp. (strain BNC1)</name>
    <dbReference type="NCBI Taxonomy" id="266779"/>
    <lineage>
        <taxon>Bacteria</taxon>
        <taxon>Pseudomonadati</taxon>
        <taxon>Pseudomonadota</taxon>
        <taxon>Alphaproteobacteria</taxon>
        <taxon>Hyphomicrobiales</taxon>
        <taxon>Phyllobacteriaceae</taxon>
        <taxon>Chelativorans</taxon>
    </lineage>
</organism>
<protein>
    <recommendedName>
        <fullName evidence="1">Acetylglutamate kinase</fullName>
        <ecNumber evidence="1">2.7.2.8</ecNumber>
    </recommendedName>
    <alternativeName>
        <fullName evidence="1">N-acetyl-L-glutamate 5-phosphotransferase</fullName>
    </alternativeName>
    <alternativeName>
        <fullName evidence="1">NAG kinase</fullName>
        <shortName evidence="1">NAGK</shortName>
    </alternativeName>
</protein>
<keyword id="KW-0028">Amino-acid biosynthesis</keyword>
<keyword id="KW-0055">Arginine biosynthesis</keyword>
<keyword id="KW-0067">ATP-binding</keyword>
<keyword id="KW-0963">Cytoplasm</keyword>
<keyword id="KW-0418">Kinase</keyword>
<keyword id="KW-0547">Nucleotide-binding</keyword>
<keyword id="KW-0808">Transferase</keyword>
<name>ARGB_CHESB</name>
<proteinExistence type="inferred from homology"/>
<comment type="function">
    <text evidence="1">Catalyzes the ATP-dependent phosphorylation of N-acetyl-L-glutamate.</text>
</comment>
<comment type="catalytic activity">
    <reaction evidence="1">
        <text>N-acetyl-L-glutamate + ATP = N-acetyl-L-glutamyl 5-phosphate + ADP</text>
        <dbReference type="Rhea" id="RHEA:14629"/>
        <dbReference type="ChEBI" id="CHEBI:30616"/>
        <dbReference type="ChEBI" id="CHEBI:44337"/>
        <dbReference type="ChEBI" id="CHEBI:57936"/>
        <dbReference type="ChEBI" id="CHEBI:456216"/>
        <dbReference type="EC" id="2.7.2.8"/>
    </reaction>
</comment>
<comment type="pathway">
    <text evidence="1">Amino-acid biosynthesis; L-arginine biosynthesis; N(2)-acetyl-L-ornithine from L-glutamate: step 2/4.</text>
</comment>
<comment type="subcellular location">
    <subcellularLocation>
        <location evidence="1">Cytoplasm</location>
    </subcellularLocation>
</comment>
<comment type="similarity">
    <text evidence="1">Belongs to the acetylglutamate kinase family. ArgB subfamily.</text>
</comment>
<comment type="sequence caution" evidence="2">
    <conflict type="erroneous initiation">
        <sequence resource="EMBL-CDS" id="ABG61784"/>
    </conflict>
</comment>
<feature type="chain" id="PRO_0000264717" description="Acetylglutamate kinase">
    <location>
        <begin position="1"/>
        <end position="297"/>
    </location>
</feature>
<feature type="binding site" evidence="1">
    <location>
        <begin position="68"/>
        <end position="69"/>
    </location>
    <ligand>
        <name>substrate</name>
    </ligand>
</feature>
<feature type="binding site" evidence="1">
    <location>
        <position position="90"/>
    </location>
    <ligand>
        <name>substrate</name>
    </ligand>
</feature>
<feature type="binding site" evidence="1">
    <location>
        <position position="195"/>
    </location>
    <ligand>
        <name>substrate</name>
    </ligand>
</feature>
<feature type="site" description="Transition state stabilizer" evidence="1">
    <location>
        <position position="33"/>
    </location>
</feature>
<feature type="site" description="Transition state stabilizer" evidence="1">
    <location>
        <position position="255"/>
    </location>
</feature>
<evidence type="ECO:0000255" key="1">
    <source>
        <dbReference type="HAMAP-Rule" id="MF_00082"/>
    </source>
</evidence>
<evidence type="ECO:0000305" key="2"/>
<gene>
    <name evidence="1" type="primary">argB</name>
    <name type="ordered locus">Meso_0380</name>
</gene>